<accession>Q1IXW9</accession>
<comment type="function">
    <text evidence="1">The RecF protein is involved in DNA metabolism; it is required for DNA replication and normal SOS inducibility. RecF binds preferentially to single-stranded, linear DNA. It also seems to bind ATP.</text>
</comment>
<comment type="subcellular location">
    <subcellularLocation>
        <location evidence="1">Cytoplasm</location>
    </subcellularLocation>
</comment>
<comment type="similarity">
    <text evidence="1">Belongs to the RecF family.</text>
</comment>
<keyword id="KW-0067">ATP-binding</keyword>
<keyword id="KW-0963">Cytoplasm</keyword>
<keyword id="KW-0227">DNA damage</keyword>
<keyword id="KW-0234">DNA repair</keyword>
<keyword id="KW-0235">DNA replication</keyword>
<keyword id="KW-0238">DNA-binding</keyword>
<keyword id="KW-0547">Nucleotide-binding</keyword>
<keyword id="KW-0742">SOS response</keyword>
<evidence type="ECO:0000255" key="1">
    <source>
        <dbReference type="HAMAP-Rule" id="MF_00365"/>
    </source>
</evidence>
<dbReference type="EMBL" id="CP000359">
    <property type="protein sequence ID" value="ABF45915.1"/>
    <property type="molecule type" value="Genomic_DNA"/>
</dbReference>
<dbReference type="RefSeq" id="WP_011530749.1">
    <property type="nucleotide sequence ID" value="NC_008025.1"/>
</dbReference>
<dbReference type="SMR" id="Q1IXW9"/>
<dbReference type="STRING" id="319795.Dgeo_1620"/>
<dbReference type="KEGG" id="dge:Dgeo_1620"/>
<dbReference type="eggNOG" id="COG1195">
    <property type="taxonomic scope" value="Bacteria"/>
</dbReference>
<dbReference type="HOGENOM" id="CLU_040267_0_1_0"/>
<dbReference type="Proteomes" id="UP000002431">
    <property type="component" value="Chromosome"/>
</dbReference>
<dbReference type="GO" id="GO:0005737">
    <property type="term" value="C:cytoplasm"/>
    <property type="evidence" value="ECO:0007669"/>
    <property type="project" value="UniProtKB-SubCell"/>
</dbReference>
<dbReference type="GO" id="GO:0005524">
    <property type="term" value="F:ATP binding"/>
    <property type="evidence" value="ECO:0007669"/>
    <property type="project" value="UniProtKB-UniRule"/>
</dbReference>
<dbReference type="GO" id="GO:0003697">
    <property type="term" value="F:single-stranded DNA binding"/>
    <property type="evidence" value="ECO:0007669"/>
    <property type="project" value="UniProtKB-UniRule"/>
</dbReference>
<dbReference type="GO" id="GO:0006260">
    <property type="term" value="P:DNA replication"/>
    <property type="evidence" value="ECO:0007669"/>
    <property type="project" value="UniProtKB-UniRule"/>
</dbReference>
<dbReference type="GO" id="GO:0000731">
    <property type="term" value="P:DNA synthesis involved in DNA repair"/>
    <property type="evidence" value="ECO:0007669"/>
    <property type="project" value="TreeGrafter"/>
</dbReference>
<dbReference type="GO" id="GO:0006302">
    <property type="term" value="P:double-strand break repair"/>
    <property type="evidence" value="ECO:0007669"/>
    <property type="project" value="TreeGrafter"/>
</dbReference>
<dbReference type="GO" id="GO:0009432">
    <property type="term" value="P:SOS response"/>
    <property type="evidence" value="ECO:0007669"/>
    <property type="project" value="UniProtKB-UniRule"/>
</dbReference>
<dbReference type="CDD" id="cd03242">
    <property type="entry name" value="ABC_RecF"/>
    <property type="match status" value="1"/>
</dbReference>
<dbReference type="Gene3D" id="3.40.50.300">
    <property type="entry name" value="P-loop containing nucleotide triphosphate hydrolases"/>
    <property type="match status" value="1"/>
</dbReference>
<dbReference type="Gene3D" id="1.20.1050.90">
    <property type="entry name" value="RecF/RecN/SMC, N-terminal domain"/>
    <property type="match status" value="1"/>
</dbReference>
<dbReference type="HAMAP" id="MF_00365">
    <property type="entry name" value="RecF"/>
    <property type="match status" value="1"/>
</dbReference>
<dbReference type="InterPro" id="IPR001238">
    <property type="entry name" value="DNA-binding_RecF"/>
</dbReference>
<dbReference type="InterPro" id="IPR018078">
    <property type="entry name" value="DNA-binding_RecF_CS"/>
</dbReference>
<dbReference type="InterPro" id="IPR027417">
    <property type="entry name" value="P-loop_NTPase"/>
</dbReference>
<dbReference type="InterPro" id="IPR003395">
    <property type="entry name" value="RecF/RecN/SMC_N"/>
</dbReference>
<dbReference type="InterPro" id="IPR042174">
    <property type="entry name" value="RecF_2"/>
</dbReference>
<dbReference type="NCBIfam" id="NF010680">
    <property type="entry name" value="PRK14079.1"/>
    <property type="match status" value="1"/>
</dbReference>
<dbReference type="NCBIfam" id="TIGR00611">
    <property type="entry name" value="recf"/>
    <property type="match status" value="1"/>
</dbReference>
<dbReference type="PANTHER" id="PTHR32182">
    <property type="entry name" value="DNA REPLICATION AND REPAIR PROTEIN RECF"/>
    <property type="match status" value="1"/>
</dbReference>
<dbReference type="PANTHER" id="PTHR32182:SF0">
    <property type="entry name" value="DNA REPLICATION AND REPAIR PROTEIN RECF"/>
    <property type="match status" value="1"/>
</dbReference>
<dbReference type="Pfam" id="PF02463">
    <property type="entry name" value="SMC_N"/>
    <property type="match status" value="1"/>
</dbReference>
<dbReference type="SUPFAM" id="SSF52540">
    <property type="entry name" value="P-loop containing nucleoside triphosphate hydrolases"/>
    <property type="match status" value="1"/>
</dbReference>
<dbReference type="PROSITE" id="PS00617">
    <property type="entry name" value="RECF_1"/>
    <property type="match status" value="1"/>
</dbReference>
<dbReference type="PROSITE" id="PS00618">
    <property type="entry name" value="RECF_2"/>
    <property type="match status" value="1"/>
</dbReference>
<proteinExistence type="inferred from homology"/>
<feature type="chain" id="PRO_1000048519" description="DNA replication and repair protein RecF">
    <location>
        <begin position="1"/>
        <end position="358"/>
    </location>
</feature>
<feature type="binding site" evidence="1">
    <location>
        <begin position="33"/>
        <end position="40"/>
    </location>
    <ligand>
        <name>ATP</name>
        <dbReference type="ChEBI" id="CHEBI:30616"/>
    </ligand>
</feature>
<reference key="1">
    <citation type="submission" date="2006-04" db="EMBL/GenBank/DDBJ databases">
        <title>Complete sequence of chromosome of Deinococcus geothermalis DSM 11300.</title>
        <authorList>
            <person name="Copeland A."/>
            <person name="Lucas S."/>
            <person name="Lapidus A."/>
            <person name="Barry K."/>
            <person name="Detter J.C."/>
            <person name="Glavina del Rio T."/>
            <person name="Hammon N."/>
            <person name="Israni S."/>
            <person name="Dalin E."/>
            <person name="Tice H."/>
            <person name="Pitluck S."/>
            <person name="Brettin T."/>
            <person name="Bruce D."/>
            <person name="Han C."/>
            <person name="Tapia R."/>
            <person name="Saunders E."/>
            <person name="Gilna P."/>
            <person name="Schmutz J."/>
            <person name="Larimer F."/>
            <person name="Land M."/>
            <person name="Hauser L."/>
            <person name="Kyrpides N."/>
            <person name="Kim E."/>
            <person name="Daly M.J."/>
            <person name="Fredrickson J.K."/>
            <person name="Makarova K.S."/>
            <person name="Gaidamakova E.K."/>
            <person name="Zhai M."/>
            <person name="Richardson P."/>
        </authorList>
    </citation>
    <scope>NUCLEOTIDE SEQUENCE [LARGE SCALE GENOMIC DNA]</scope>
    <source>
        <strain>DSM 11300 / CIP 105573 / AG-3a</strain>
    </source>
</reference>
<protein>
    <recommendedName>
        <fullName evidence="1">DNA replication and repair protein RecF</fullName>
    </recommendedName>
</protein>
<sequence>MSGVQLSSLSTLNYRNLAPGTLHFPAGVTGVFGENGAGKTNLLEAAYLALTGLTDVTRLEQLIQSGEREAYVRADVQQGGSLSIQEVGLGRGRRHLKVDGVRAKTGDLPRGSAVWIRPEDSELVFGPPAGRRAYLDALLSRLSARYGQQLARYERTVAQRNAALKAGEDWAMHVWDDALVKLGTDIMLFRRRALTRLDELAREANAQLGSRKPLTLTLSESTTPETYAHDLAARRAEELSRGATVTGPHRDDLILTLGELPASEYASRGEGRTVALALRCAELELLAEKFGEKPVLLIDDFTAELDPGRRGFLLDLAASVPQAIVTGTERAPGAALTLRAHAGRFTEESRPATVGVGA</sequence>
<name>RECF_DEIGD</name>
<organism>
    <name type="scientific">Deinococcus geothermalis (strain DSM 11300 / CIP 105573 / AG-3a)</name>
    <dbReference type="NCBI Taxonomy" id="319795"/>
    <lineage>
        <taxon>Bacteria</taxon>
        <taxon>Thermotogati</taxon>
        <taxon>Deinococcota</taxon>
        <taxon>Deinococci</taxon>
        <taxon>Deinococcales</taxon>
        <taxon>Deinococcaceae</taxon>
        <taxon>Deinococcus</taxon>
    </lineage>
</organism>
<gene>
    <name evidence="1" type="primary">recF</name>
    <name type="ordered locus">Dgeo_1620</name>
</gene>